<proteinExistence type="inferred from homology"/>
<accession>Q48GE1</accession>
<gene>
    <name evidence="1" type="primary">fliE</name>
    <name type="ordered locus">PSPPH_3384</name>
</gene>
<evidence type="ECO:0000255" key="1">
    <source>
        <dbReference type="HAMAP-Rule" id="MF_00724"/>
    </source>
</evidence>
<dbReference type="EMBL" id="CP000058">
    <property type="protein sequence ID" value="AAZ33593.1"/>
    <property type="molecule type" value="Genomic_DNA"/>
</dbReference>
<dbReference type="RefSeq" id="WP_004658736.1">
    <property type="nucleotide sequence ID" value="NC_005773.3"/>
</dbReference>
<dbReference type="SMR" id="Q48GE1"/>
<dbReference type="KEGG" id="psp:PSPPH_3384"/>
<dbReference type="eggNOG" id="COG1677">
    <property type="taxonomic scope" value="Bacteria"/>
</dbReference>
<dbReference type="HOGENOM" id="CLU_147249_0_0_6"/>
<dbReference type="Proteomes" id="UP000000551">
    <property type="component" value="Chromosome"/>
</dbReference>
<dbReference type="GO" id="GO:0009425">
    <property type="term" value="C:bacterial-type flagellum basal body"/>
    <property type="evidence" value="ECO:0007669"/>
    <property type="project" value="UniProtKB-SubCell"/>
</dbReference>
<dbReference type="GO" id="GO:0003774">
    <property type="term" value="F:cytoskeletal motor activity"/>
    <property type="evidence" value="ECO:0007669"/>
    <property type="project" value="InterPro"/>
</dbReference>
<dbReference type="GO" id="GO:0005198">
    <property type="term" value="F:structural molecule activity"/>
    <property type="evidence" value="ECO:0007669"/>
    <property type="project" value="InterPro"/>
</dbReference>
<dbReference type="GO" id="GO:0071973">
    <property type="term" value="P:bacterial-type flagellum-dependent cell motility"/>
    <property type="evidence" value="ECO:0007669"/>
    <property type="project" value="InterPro"/>
</dbReference>
<dbReference type="HAMAP" id="MF_00724">
    <property type="entry name" value="FliE"/>
    <property type="match status" value="1"/>
</dbReference>
<dbReference type="InterPro" id="IPR001624">
    <property type="entry name" value="FliE"/>
</dbReference>
<dbReference type="NCBIfam" id="TIGR00205">
    <property type="entry name" value="fliE"/>
    <property type="match status" value="1"/>
</dbReference>
<dbReference type="PANTHER" id="PTHR34653">
    <property type="match status" value="1"/>
</dbReference>
<dbReference type="PANTHER" id="PTHR34653:SF1">
    <property type="entry name" value="FLAGELLAR HOOK-BASAL BODY COMPLEX PROTEIN FLIE"/>
    <property type="match status" value="1"/>
</dbReference>
<dbReference type="Pfam" id="PF02049">
    <property type="entry name" value="FliE"/>
    <property type="match status" value="1"/>
</dbReference>
<dbReference type="PRINTS" id="PR01006">
    <property type="entry name" value="FLGHOOKFLIE"/>
</dbReference>
<sequence length="109" mass="11690">MSKGVEFNRLMLDMRAMQMDAMSAPKPVSGAQEAGASSFADMLGQAVNKVAQTQQASSQLANAFEIGKSGVDLTDVMISSQKASVSFQALTQVRNKLVQAYQDIMQMPV</sequence>
<organism>
    <name type="scientific">Pseudomonas savastanoi pv. phaseolicola (strain 1448A / Race 6)</name>
    <name type="common">Pseudomonas syringae pv. phaseolicola (strain 1448A / Race 6)</name>
    <dbReference type="NCBI Taxonomy" id="264730"/>
    <lineage>
        <taxon>Bacteria</taxon>
        <taxon>Pseudomonadati</taxon>
        <taxon>Pseudomonadota</taxon>
        <taxon>Gammaproteobacteria</taxon>
        <taxon>Pseudomonadales</taxon>
        <taxon>Pseudomonadaceae</taxon>
        <taxon>Pseudomonas</taxon>
    </lineage>
</organism>
<protein>
    <recommendedName>
        <fullName evidence="1">Flagellar hook-basal body complex protein FliE</fullName>
    </recommendedName>
</protein>
<keyword id="KW-0975">Bacterial flagellum</keyword>
<comment type="subcellular location">
    <subcellularLocation>
        <location evidence="1">Bacterial flagellum basal body</location>
    </subcellularLocation>
</comment>
<comment type="similarity">
    <text evidence="1">Belongs to the FliE family.</text>
</comment>
<reference key="1">
    <citation type="journal article" date="2005" name="J. Bacteriol.">
        <title>Whole-genome sequence analysis of Pseudomonas syringae pv. phaseolicola 1448A reveals divergence among pathovars in genes involved in virulence and transposition.</title>
        <authorList>
            <person name="Joardar V."/>
            <person name="Lindeberg M."/>
            <person name="Jackson R.W."/>
            <person name="Selengut J."/>
            <person name="Dodson R."/>
            <person name="Brinkac L.M."/>
            <person name="Daugherty S.C."/>
            <person name="DeBoy R.T."/>
            <person name="Durkin A.S."/>
            <person name="Gwinn Giglio M."/>
            <person name="Madupu R."/>
            <person name="Nelson W.C."/>
            <person name="Rosovitz M.J."/>
            <person name="Sullivan S.A."/>
            <person name="Crabtree J."/>
            <person name="Creasy T."/>
            <person name="Davidsen T.M."/>
            <person name="Haft D.H."/>
            <person name="Zafar N."/>
            <person name="Zhou L."/>
            <person name="Halpin R."/>
            <person name="Holley T."/>
            <person name="Khouri H.M."/>
            <person name="Feldblyum T.V."/>
            <person name="White O."/>
            <person name="Fraser C.M."/>
            <person name="Chatterjee A.K."/>
            <person name="Cartinhour S."/>
            <person name="Schneider D."/>
            <person name="Mansfield J.W."/>
            <person name="Collmer A."/>
            <person name="Buell R."/>
        </authorList>
    </citation>
    <scope>NUCLEOTIDE SEQUENCE [LARGE SCALE GENOMIC DNA]</scope>
    <source>
        <strain>1448A / Race 6</strain>
    </source>
</reference>
<name>FLIE_PSE14</name>
<feature type="chain" id="PRO_1000045863" description="Flagellar hook-basal body complex protein FliE">
    <location>
        <begin position="1"/>
        <end position="109"/>
    </location>
</feature>